<name>RS8_CERS1</name>
<evidence type="ECO:0000255" key="1">
    <source>
        <dbReference type="HAMAP-Rule" id="MF_01302"/>
    </source>
</evidence>
<evidence type="ECO:0000305" key="2"/>
<proteinExistence type="inferred from homology"/>
<comment type="function">
    <text evidence="1">One of the primary rRNA binding proteins, it binds directly to 16S rRNA central domain where it helps coordinate assembly of the platform of the 30S subunit.</text>
</comment>
<comment type="subunit">
    <text evidence="1">Part of the 30S ribosomal subunit. Contacts proteins S5 and S12.</text>
</comment>
<comment type="similarity">
    <text evidence="1">Belongs to the universal ribosomal protein uS8 family.</text>
</comment>
<feature type="chain" id="PRO_0000290912" description="Small ribosomal subunit protein uS8">
    <location>
        <begin position="1"/>
        <end position="132"/>
    </location>
</feature>
<accession>A3PGM5</accession>
<sequence>MSVNDPLGDMLTRIRNAQLRGKSTVSTPASRLRAWVLDVLQAEGYIRGYEKKETENGQGELVISLKYFEGTPVIRELKRVSKPGRRVYMATKDLPSVRNGLGVSIISTPKGVMSDASARSANVGGEVLCTVF</sequence>
<protein>
    <recommendedName>
        <fullName evidence="1">Small ribosomal subunit protein uS8</fullName>
    </recommendedName>
    <alternativeName>
        <fullName evidence="2">30S ribosomal protein S8</fullName>
    </alternativeName>
</protein>
<reference key="1">
    <citation type="submission" date="2007-02" db="EMBL/GenBank/DDBJ databases">
        <title>Complete sequence of chromosome 1 of Rhodobacter sphaeroides ATCC 17029.</title>
        <authorList>
            <person name="Copeland A."/>
            <person name="Lucas S."/>
            <person name="Lapidus A."/>
            <person name="Barry K."/>
            <person name="Detter J.C."/>
            <person name="Glavina del Rio T."/>
            <person name="Hammon N."/>
            <person name="Israni S."/>
            <person name="Dalin E."/>
            <person name="Tice H."/>
            <person name="Pitluck S."/>
            <person name="Kiss H."/>
            <person name="Brettin T."/>
            <person name="Bruce D."/>
            <person name="Han C."/>
            <person name="Tapia R."/>
            <person name="Gilna P."/>
            <person name="Schmutz J."/>
            <person name="Larimer F."/>
            <person name="Land M."/>
            <person name="Hauser L."/>
            <person name="Kyrpides N."/>
            <person name="Mikhailova N."/>
            <person name="Richardson P."/>
            <person name="Mackenzie C."/>
            <person name="Choudhary M."/>
            <person name="Donohue T.J."/>
            <person name="Kaplan S."/>
        </authorList>
    </citation>
    <scope>NUCLEOTIDE SEQUENCE [LARGE SCALE GENOMIC DNA]</scope>
    <source>
        <strain>ATCC 17029 / ATH 2.4.9</strain>
    </source>
</reference>
<gene>
    <name evidence="1" type="primary">rpsH</name>
    <name type="ordered locus">Rsph17029_0375</name>
</gene>
<organism>
    <name type="scientific">Cereibacter sphaeroides (strain ATCC 17029 / ATH 2.4.9)</name>
    <name type="common">Rhodobacter sphaeroides</name>
    <dbReference type="NCBI Taxonomy" id="349101"/>
    <lineage>
        <taxon>Bacteria</taxon>
        <taxon>Pseudomonadati</taxon>
        <taxon>Pseudomonadota</taxon>
        <taxon>Alphaproteobacteria</taxon>
        <taxon>Rhodobacterales</taxon>
        <taxon>Paracoccaceae</taxon>
        <taxon>Cereibacter</taxon>
    </lineage>
</organism>
<dbReference type="EMBL" id="CP000577">
    <property type="protein sequence ID" value="ABN75491.1"/>
    <property type="molecule type" value="Genomic_DNA"/>
</dbReference>
<dbReference type="RefSeq" id="WP_002722516.1">
    <property type="nucleotide sequence ID" value="NC_009049.1"/>
</dbReference>
<dbReference type="SMR" id="A3PGM5"/>
<dbReference type="GeneID" id="67445514"/>
<dbReference type="KEGG" id="rsh:Rsph17029_0375"/>
<dbReference type="HOGENOM" id="CLU_098428_0_0_5"/>
<dbReference type="GO" id="GO:1990904">
    <property type="term" value="C:ribonucleoprotein complex"/>
    <property type="evidence" value="ECO:0007669"/>
    <property type="project" value="UniProtKB-KW"/>
</dbReference>
<dbReference type="GO" id="GO:0005840">
    <property type="term" value="C:ribosome"/>
    <property type="evidence" value="ECO:0007669"/>
    <property type="project" value="UniProtKB-KW"/>
</dbReference>
<dbReference type="GO" id="GO:0019843">
    <property type="term" value="F:rRNA binding"/>
    <property type="evidence" value="ECO:0007669"/>
    <property type="project" value="UniProtKB-UniRule"/>
</dbReference>
<dbReference type="GO" id="GO:0003735">
    <property type="term" value="F:structural constituent of ribosome"/>
    <property type="evidence" value="ECO:0007669"/>
    <property type="project" value="InterPro"/>
</dbReference>
<dbReference type="GO" id="GO:0006412">
    <property type="term" value="P:translation"/>
    <property type="evidence" value="ECO:0007669"/>
    <property type="project" value="UniProtKB-UniRule"/>
</dbReference>
<dbReference type="FunFam" id="3.30.1370.30:FF:000002">
    <property type="entry name" value="30S ribosomal protein S8"/>
    <property type="match status" value="1"/>
</dbReference>
<dbReference type="FunFam" id="3.30.1490.10:FF:000001">
    <property type="entry name" value="30S ribosomal protein S8"/>
    <property type="match status" value="1"/>
</dbReference>
<dbReference type="Gene3D" id="3.30.1370.30">
    <property type="match status" value="1"/>
</dbReference>
<dbReference type="Gene3D" id="3.30.1490.10">
    <property type="match status" value="1"/>
</dbReference>
<dbReference type="HAMAP" id="MF_01302_B">
    <property type="entry name" value="Ribosomal_uS8_B"/>
    <property type="match status" value="1"/>
</dbReference>
<dbReference type="InterPro" id="IPR000630">
    <property type="entry name" value="Ribosomal_uS8"/>
</dbReference>
<dbReference type="InterPro" id="IPR047863">
    <property type="entry name" value="Ribosomal_uS8_CS"/>
</dbReference>
<dbReference type="InterPro" id="IPR035987">
    <property type="entry name" value="Ribosomal_uS8_sf"/>
</dbReference>
<dbReference type="NCBIfam" id="NF001109">
    <property type="entry name" value="PRK00136.1"/>
    <property type="match status" value="1"/>
</dbReference>
<dbReference type="PANTHER" id="PTHR11758">
    <property type="entry name" value="40S RIBOSOMAL PROTEIN S15A"/>
    <property type="match status" value="1"/>
</dbReference>
<dbReference type="Pfam" id="PF00410">
    <property type="entry name" value="Ribosomal_S8"/>
    <property type="match status" value="1"/>
</dbReference>
<dbReference type="SUPFAM" id="SSF56047">
    <property type="entry name" value="Ribosomal protein S8"/>
    <property type="match status" value="1"/>
</dbReference>
<dbReference type="PROSITE" id="PS00053">
    <property type="entry name" value="RIBOSOMAL_S8"/>
    <property type="match status" value="1"/>
</dbReference>
<keyword id="KW-0687">Ribonucleoprotein</keyword>
<keyword id="KW-0689">Ribosomal protein</keyword>
<keyword id="KW-0694">RNA-binding</keyword>
<keyword id="KW-0699">rRNA-binding</keyword>